<dbReference type="EMBL" id="CR522870">
    <property type="protein sequence ID" value="CAG37320.1"/>
    <property type="molecule type" value="Genomic_DNA"/>
</dbReference>
<dbReference type="RefSeq" id="WP_011189832.1">
    <property type="nucleotide sequence ID" value="NC_006138.1"/>
</dbReference>
<dbReference type="SMR" id="Q6AK06"/>
<dbReference type="STRING" id="177439.DP2591"/>
<dbReference type="KEGG" id="dps:DP2591"/>
<dbReference type="eggNOG" id="COG0211">
    <property type="taxonomic scope" value="Bacteria"/>
</dbReference>
<dbReference type="HOGENOM" id="CLU_095424_4_0_7"/>
<dbReference type="OrthoDB" id="9803474at2"/>
<dbReference type="Proteomes" id="UP000000602">
    <property type="component" value="Chromosome"/>
</dbReference>
<dbReference type="GO" id="GO:0022625">
    <property type="term" value="C:cytosolic large ribosomal subunit"/>
    <property type="evidence" value="ECO:0007669"/>
    <property type="project" value="TreeGrafter"/>
</dbReference>
<dbReference type="GO" id="GO:0003735">
    <property type="term" value="F:structural constituent of ribosome"/>
    <property type="evidence" value="ECO:0007669"/>
    <property type="project" value="InterPro"/>
</dbReference>
<dbReference type="GO" id="GO:0006412">
    <property type="term" value="P:translation"/>
    <property type="evidence" value="ECO:0007669"/>
    <property type="project" value="UniProtKB-UniRule"/>
</dbReference>
<dbReference type="FunFam" id="2.40.50.100:FF:000004">
    <property type="entry name" value="50S ribosomal protein L27"/>
    <property type="match status" value="1"/>
</dbReference>
<dbReference type="Gene3D" id="2.40.50.100">
    <property type="match status" value="1"/>
</dbReference>
<dbReference type="HAMAP" id="MF_00539">
    <property type="entry name" value="Ribosomal_bL27"/>
    <property type="match status" value="1"/>
</dbReference>
<dbReference type="InterPro" id="IPR001684">
    <property type="entry name" value="Ribosomal_bL27"/>
</dbReference>
<dbReference type="NCBIfam" id="TIGR00062">
    <property type="entry name" value="L27"/>
    <property type="match status" value="1"/>
</dbReference>
<dbReference type="PANTHER" id="PTHR15893:SF0">
    <property type="entry name" value="LARGE RIBOSOMAL SUBUNIT PROTEIN BL27M"/>
    <property type="match status" value="1"/>
</dbReference>
<dbReference type="PANTHER" id="PTHR15893">
    <property type="entry name" value="RIBOSOMAL PROTEIN L27"/>
    <property type="match status" value="1"/>
</dbReference>
<dbReference type="Pfam" id="PF01016">
    <property type="entry name" value="Ribosomal_L27"/>
    <property type="match status" value="1"/>
</dbReference>
<dbReference type="PRINTS" id="PR00063">
    <property type="entry name" value="RIBOSOMALL27"/>
</dbReference>
<dbReference type="SUPFAM" id="SSF110324">
    <property type="entry name" value="Ribosomal L27 protein-like"/>
    <property type="match status" value="1"/>
</dbReference>
<sequence>MAHKKAGGSSRNGRDSAGQRRGVKKFGGEPVRSGNILIRQLGTKVHPGTNVGCGRDYTLFAKIDGVVKFEDFGKNKKRVSVYPAAE</sequence>
<keyword id="KW-1185">Reference proteome</keyword>
<keyword id="KW-0687">Ribonucleoprotein</keyword>
<keyword id="KW-0689">Ribosomal protein</keyword>
<gene>
    <name evidence="1" type="primary">rpmA</name>
    <name type="ordered locus">DP2591</name>
</gene>
<reference key="1">
    <citation type="journal article" date="2004" name="Environ. Microbiol.">
        <title>The genome of Desulfotalea psychrophila, a sulfate-reducing bacterium from permanently cold Arctic sediments.</title>
        <authorList>
            <person name="Rabus R."/>
            <person name="Ruepp A."/>
            <person name="Frickey T."/>
            <person name="Rattei T."/>
            <person name="Fartmann B."/>
            <person name="Stark M."/>
            <person name="Bauer M."/>
            <person name="Zibat A."/>
            <person name="Lombardot T."/>
            <person name="Becker I."/>
            <person name="Amann J."/>
            <person name="Gellner K."/>
            <person name="Teeling H."/>
            <person name="Leuschner W.D."/>
            <person name="Gloeckner F.-O."/>
            <person name="Lupas A.N."/>
            <person name="Amann R."/>
            <person name="Klenk H.-P."/>
        </authorList>
    </citation>
    <scope>NUCLEOTIDE SEQUENCE [LARGE SCALE GENOMIC DNA]</scope>
    <source>
        <strain>DSM 12343 / LSv54</strain>
    </source>
</reference>
<feature type="chain" id="PRO_0000181083" description="Large ribosomal subunit protein bL27">
    <location>
        <begin position="1"/>
        <end position="86"/>
    </location>
</feature>
<feature type="region of interest" description="Disordered" evidence="2">
    <location>
        <begin position="1"/>
        <end position="31"/>
    </location>
</feature>
<protein>
    <recommendedName>
        <fullName evidence="1">Large ribosomal subunit protein bL27</fullName>
    </recommendedName>
    <alternativeName>
        <fullName evidence="3">50S ribosomal protein L27</fullName>
    </alternativeName>
</protein>
<organism>
    <name type="scientific">Desulfotalea psychrophila (strain LSv54 / DSM 12343)</name>
    <dbReference type="NCBI Taxonomy" id="177439"/>
    <lineage>
        <taxon>Bacteria</taxon>
        <taxon>Pseudomonadati</taxon>
        <taxon>Thermodesulfobacteriota</taxon>
        <taxon>Desulfobulbia</taxon>
        <taxon>Desulfobulbales</taxon>
        <taxon>Desulfocapsaceae</taxon>
        <taxon>Desulfotalea</taxon>
    </lineage>
</organism>
<proteinExistence type="inferred from homology"/>
<comment type="similarity">
    <text evidence="1">Belongs to the bacterial ribosomal protein bL27 family.</text>
</comment>
<name>RL27_DESPS</name>
<evidence type="ECO:0000255" key="1">
    <source>
        <dbReference type="HAMAP-Rule" id="MF_00539"/>
    </source>
</evidence>
<evidence type="ECO:0000256" key="2">
    <source>
        <dbReference type="SAM" id="MobiDB-lite"/>
    </source>
</evidence>
<evidence type="ECO:0000305" key="3"/>
<accession>Q6AK06</accession>